<proteinExistence type="inferred from homology"/>
<reference key="1">
    <citation type="submission" date="2008-07" db="EMBL/GenBank/DDBJ databases">
        <title>Complete sequence of Geobacter bemidjiensis BEM.</title>
        <authorList>
            <consortium name="US DOE Joint Genome Institute"/>
            <person name="Lucas S."/>
            <person name="Copeland A."/>
            <person name="Lapidus A."/>
            <person name="Glavina del Rio T."/>
            <person name="Dalin E."/>
            <person name="Tice H."/>
            <person name="Bruce D."/>
            <person name="Goodwin L."/>
            <person name="Pitluck S."/>
            <person name="Kiss H."/>
            <person name="Brettin T."/>
            <person name="Detter J.C."/>
            <person name="Han C."/>
            <person name="Kuske C.R."/>
            <person name="Schmutz J."/>
            <person name="Larimer F."/>
            <person name="Land M."/>
            <person name="Hauser L."/>
            <person name="Kyrpides N."/>
            <person name="Lykidis A."/>
            <person name="Lovley D."/>
            <person name="Richardson P."/>
        </authorList>
    </citation>
    <scope>NUCLEOTIDE SEQUENCE [LARGE SCALE GENOMIC DNA]</scope>
    <source>
        <strain>ATCC BAA-1014 / DSM 16622 / JCM 12645 / Bem</strain>
    </source>
</reference>
<dbReference type="EC" id="5.4.99.12" evidence="1"/>
<dbReference type="EMBL" id="CP001124">
    <property type="protein sequence ID" value="ACH37932.1"/>
    <property type="molecule type" value="Genomic_DNA"/>
</dbReference>
<dbReference type="RefSeq" id="WP_012529344.1">
    <property type="nucleotide sequence ID" value="NC_011146.1"/>
</dbReference>
<dbReference type="SMR" id="B5EFM8"/>
<dbReference type="STRING" id="404380.Gbem_0911"/>
<dbReference type="KEGG" id="gbm:Gbem_0911"/>
<dbReference type="eggNOG" id="COG0101">
    <property type="taxonomic scope" value="Bacteria"/>
</dbReference>
<dbReference type="HOGENOM" id="CLU_014673_0_1_7"/>
<dbReference type="OrthoDB" id="9811823at2"/>
<dbReference type="Proteomes" id="UP000008825">
    <property type="component" value="Chromosome"/>
</dbReference>
<dbReference type="GO" id="GO:0003723">
    <property type="term" value="F:RNA binding"/>
    <property type="evidence" value="ECO:0007669"/>
    <property type="project" value="InterPro"/>
</dbReference>
<dbReference type="GO" id="GO:0160147">
    <property type="term" value="F:tRNA pseudouridine(38-40) synthase activity"/>
    <property type="evidence" value="ECO:0007669"/>
    <property type="project" value="UniProtKB-EC"/>
</dbReference>
<dbReference type="GO" id="GO:0031119">
    <property type="term" value="P:tRNA pseudouridine synthesis"/>
    <property type="evidence" value="ECO:0007669"/>
    <property type="project" value="UniProtKB-UniRule"/>
</dbReference>
<dbReference type="CDD" id="cd02570">
    <property type="entry name" value="PseudoU_synth_EcTruA"/>
    <property type="match status" value="1"/>
</dbReference>
<dbReference type="FunFam" id="3.30.70.580:FF:000001">
    <property type="entry name" value="tRNA pseudouridine synthase A"/>
    <property type="match status" value="1"/>
</dbReference>
<dbReference type="Gene3D" id="3.30.70.660">
    <property type="entry name" value="Pseudouridine synthase I, catalytic domain, C-terminal subdomain"/>
    <property type="match status" value="1"/>
</dbReference>
<dbReference type="Gene3D" id="3.30.70.580">
    <property type="entry name" value="Pseudouridine synthase I, catalytic domain, N-terminal subdomain"/>
    <property type="match status" value="1"/>
</dbReference>
<dbReference type="HAMAP" id="MF_00171">
    <property type="entry name" value="TruA"/>
    <property type="match status" value="1"/>
</dbReference>
<dbReference type="InterPro" id="IPR020103">
    <property type="entry name" value="PsdUridine_synth_cat_dom_sf"/>
</dbReference>
<dbReference type="InterPro" id="IPR001406">
    <property type="entry name" value="PsdUridine_synth_TruA"/>
</dbReference>
<dbReference type="InterPro" id="IPR020097">
    <property type="entry name" value="PsdUridine_synth_TruA_a/b_dom"/>
</dbReference>
<dbReference type="InterPro" id="IPR020095">
    <property type="entry name" value="PsdUridine_synth_TruA_C"/>
</dbReference>
<dbReference type="InterPro" id="IPR020094">
    <property type="entry name" value="TruA/RsuA/RluB/E/F_N"/>
</dbReference>
<dbReference type="NCBIfam" id="TIGR00071">
    <property type="entry name" value="hisT_truA"/>
    <property type="match status" value="1"/>
</dbReference>
<dbReference type="PANTHER" id="PTHR11142">
    <property type="entry name" value="PSEUDOURIDYLATE SYNTHASE"/>
    <property type="match status" value="1"/>
</dbReference>
<dbReference type="PANTHER" id="PTHR11142:SF0">
    <property type="entry name" value="TRNA PSEUDOURIDINE SYNTHASE-LIKE 1"/>
    <property type="match status" value="1"/>
</dbReference>
<dbReference type="Pfam" id="PF01416">
    <property type="entry name" value="PseudoU_synth_1"/>
    <property type="match status" value="2"/>
</dbReference>
<dbReference type="PIRSF" id="PIRSF001430">
    <property type="entry name" value="tRNA_psdUrid_synth"/>
    <property type="match status" value="1"/>
</dbReference>
<dbReference type="SUPFAM" id="SSF55120">
    <property type="entry name" value="Pseudouridine synthase"/>
    <property type="match status" value="1"/>
</dbReference>
<organism>
    <name type="scientific">Citrifermentans bemidjiense (strain ATCC BAA-1014 / DSM 16622 / JCM 12645 / Bem)</name>
    <name type="common">Geobacter bemidjiensis</name>
    <dbReference type="NCBI Taxonomy" id="404380"/>
    <lineage>
        <taxon>Bacteria</taxon>
        <taxon>Pseudomonadati</taxon>
        <taxon>Thermodesulfobacteriota</taxon>
        <taxon>Desulfuromonadia</taxon>
        <taxon>Geobacterales</taxon>
        <taxon>Geobacteraceae</taxon>
        <taxon>Citrifermentans</taxon>
    </lineage>
</organism>
<accession>B5EFM8</accession>
<feature type="chain" id="PRO_1000097745" description="tRNA pseudouridine synthase A">
    <location>
        <begin position="1"/>
        <end position="250"/>
    </location>
</feature>
<feature type="active site" description="Nucleophile" evidence="1">
    <location>
        <position position="52"/>
    </location>
</feature>
<feature type="binding site" evidence="1">
    <location>
        <position position="110"/>
    </location>
    <ligand>
        <name>substrate</name>
    </ligand>
</feature>
<keyword id="KW-0413">Isomerase</keyword>
<keyword id="KW-1185">Reference proteome</keyword>
<keyword id="KW-0819">tRNA processing</keyword>
<protein>
    <recommendedName>
        <fullName evidence="1">tRNA pseudouridine synthase A</fullName>
        <ecNumber evidence="1">5.4.99.12</ecNumber>
    </recommendedName>
    <alternativeName>
        <fullName evidence="1">tRNA pseudouridine(38-40) synthase</fullName>
    </alternativeName>
    <alternativeName>
        <fullName evidence="1">tRNA pseudouridylate synthase I</fullName>
    </alternativeName>
    <alternativeName>
        <fullName evidence="1">tRNA-uridine isomerase I</fullName>
    </alternativeName>
</protein>
<gene>
    <name evidence="1" type="primary">truA</name>
    <name type="ordered locus">Gbem_0911</name>
</gene>
<evidence type="ECO:0000255" key="1">
    <source>
        <dbReference type="HAMAP-Rule" id="MF_00171"/>
    </source>
</evidence>
<comment type="function">
    <text evidence="1">Formation of pseudouridine at positions 38, 39 and 40 in the anticodon stem and loop of transfer RNAs.</text>
</comment>
<comment type="catalytic activity">
    <reaction evidence="1">
        <text>uridine(38/39/40) in tRNA = pseudouridine(38/39/40) in tRNA</text>
        <dbReference type="Rhea" id="RHEA:22376"/>
        <dbReference type="Rhea" id="RHEA-COMP:10085"/>
        <dbReference type="Rhea" id="RHEA-COMP:10087"/>
        <dbReference type="ChEBI" id="CHEBI:65314"/>
        <dbReference type="ChEBI" id="CHEBI:65315"/>
        <dbReference type="EC" id="5.4.99.12"/>
    </reaction>
</comment>
<comment type="subunit">
    <text evidence="1">Homodimer.</text>
</comment>
<comment type="similarity">
    <text evidence="1">Belongs to the tRNA pseudouridine synthase TruA family.</text>
</comment>
<sequence length="250" mass="27769">MRNIKLIIEYDGTAYCGWQVQPNGRTVQEVLQEALAAMLGEKTPLHGSGRTDAGVHARGMVACFKTDKAMPLRAFREGLNCLLPGDIAVREACEVPLEFHPRFDAHAKHYRYTILLDDLRSPLSRLTVWRLKGKLDIQAMRAACAAFVGEHDFAAFRASNCAAKTTVRRIYSMDLVQEGCLLHLDVKGSGFLKNMVRIITGTLIEVGQGKKSVEDVARLLQGGDRQQNSGMTVPPQGLCLMQVYYQEKCD</sequence>
<name>TRUA_CITBB</name>